<gene>
    <name type="primary">pmpB</name>
    <name type="ordered locus">CT_413</name>
</gene>
<reference key="1">
    <citation type="journal article" date="1998" name="Science">
        <title>Genome sequence of an obligate intracellular pathogen of humans: Chlamydia trachomatis.</title>
        <authorList>
            <person name="Stephens R.S."/>
            <person name="Kalman S."/>
            <person name="Lammel C.J."/>
            <person name="Fan J."/>
            <person name="Marathe R."/>
            <person name="Aravind L."/>
            <person name="Mitchell W.P."/>
            <person name="Olinger L."/>
            <person name="Tatusov R.L."/>
            <person name="Zhao Q."/>
            <person name="Koonin E.V."/>
            <person name="Davis R.W."/>
        </authorList>
    </citation>
    <scope>NUCLEOTIDE SEQUENCE [LARGE SCALE GENOMIC DNA]</scope>
    <source>
        <strain>ATCC VR-885 / DSM 19411 / UW-3/Cx</strain>
    </source>
</reference>
<accession>O84418</accession>
<dbReference type="EMBL" id="AE001273">
    <property type="protein sequence ID" value="AAC68010.1"/>
    <property type="status" value="ALT_INIT"/>
    <property type="molecule type" value="Genomic_DNA"/>
</dbReference>
<dbReference type="PIR" id="G71518">
    <property type="entry name" value="G71518"/>
</dbReference>
<dbReference type="RefSeq" id="NP_219923.1">
    <property type="nucleotide sequence ID" value="NC_000117.1"/>
</dbReference>
<dbReference type="STRING" id="272561.CT_413"/>
<dbReference type="TCDB" id="1.B.12.1.8">
    <property type="family name" value="the autotransporter-1 (at-1) family"/>
</dbReference>
<dbReference type="EnsemblBacteria" id="AAC68010">
    <property type="protein sequence ID" value="AAC68010"/>
    <property type="gene ID" value="CT_413"/>
</dbReference>
<dbReference type="GeneID" id="884703"/>
<dbReference type="KEGG" id="ctr:CT_413"/>
<dbReference type="PATRIC" id="fig|272561.5.peg.444"/>
<dbReference type="HOGENOM" id="CLU_001452_0_0_0"/>
<dbReference type="InParanoid" id="O84418"/>
<dbReference type="OrthoDB" id="16561at2"/>
<dbReference type="Proteomes" id="UP000000431">
    <property type="component" value="Chromosome"/>
</dbReference>
<dbReference type="GO" id="GO:0009279">
    <property type="term" value="C:cell outer membrane"/>
    <property type="evidence" value="ECO:0007669"/>
    <property type="project" value="UniProtKB-SubCell"/>
</dbReference>
<dbReference type="GO" id="GO:0005576">
    <property type="term" value="C:extracellular region"/>
    <property type="evidence" value="ECO:0007669"/>
    <property type="project" value="UniProtKB-KW"/>
</dbReference>
<dbReference type="GO" id="GO:0043130">
    <property type="term" value="F:ubiquitin binding"/>
    <property type="evidence" value="ECO:0000318"/>
    <property type="project" value="GO_Central"/>
</dbReference>
<dbReference type="GO" id="GO:0000724">
    <property type="term" value="P:double-strand break repair via homologous recombination"/>
    <property type="evidence" value="ECO:0000318"/>
    <property type="project" value="GO_Central"/>
</dbReference>
<dbReference type="Gene3D" id="2.40.128.130">
    <property type="entry name" value="Autotransporter beta-domain"/>
    <property type="match status" value="1"/>
</dbReference>
<dbReference type="InterPro" id="IPR005546">
    <property type="entry name" value="Autotransporte_beta"/>
</dbReference>
<dbReference type="InterPro" id="IPR036709">
    <property type="entry name" value="Autotransporte_beta_dom_sf"/>
</dbReference>
<dbReference type="InterPro" id="IPR006626">
    <property type="entry name" value="PbH1"/>
</dbReference>
<dbReference type="InterPro" id="IPR011427">
    <property type="entry name" value="Polymorphic_membr_middle"/>
</dbReference>
<dbReference type="InterPro" id="IPR003368">
    <property type="entry name" value="POMP_repeat"/>
</dbReference>
<dbReference type="InterPro" id="IPR051246">
    <property type="entry name" value="WDR48"/>
</dbReference>
<dbReference type="NCBIfam" id="TIGR01376">
    <property type="entry name" value="POMP_repeat"/>
    <property type="match status" value="6"/>
</dbReference>
<dbReference type="PANTHER" id="PTHR19862">
    <property type="entry name" value="WD REPEAT-CONTAINING PROTEIN 48"/>
    <property type="match status" value="1"/>
</dbReference>
<dbReference type="PANTHER" id="PTHR19862:SF14">
    <property type="entry name" value="WD REPEAT-CONTAINING PROTEIN 48"/>
    <property type="match status" value="1"/>
</dbReference>
<dbReference type="Pfam" id="PF03797">
    <property type="entry name" value="Autotransporter"/>
    <property type="match status" value="1"/>
</dbReference>
<dbReference type="Pfam" id="PF02415">
    <property type="entry name" value="Chlam_PMP"/>
    <property type="match status" value="5"/>
</dbReference>
<dbReference type="Pfam" id="PF07548">
    <property type="entry name" value="ChlamPMP_M"/>
    <property type="match status" value="1"/>
</dbReference>
<dbReference type="SMART" id="SM00869">
    <property type="entry name" value="Autotransporter"/>
    <property type="match status" value="1"/>
</dbReference>
<dbReference type="SMART" id="SM00710">
    <property type="entry name" value="PbH1"/>
    <property type="match status" value="9"/>
</dbReference>
<dbReference type="SUPFAM" id="SSF103515">
    <property type="entry name" value="Autotransporter"/>
    <property type="match status" value="1"/>
</dbReference>
<dbReference type="PROSITE" id="PS51208">
    <property type="entry name" value="AUTOTRANSPORTER"/>
    <property type="match status" value="1"/>
</dbReference>
<evidence type="ECO:0000255" key="1"/>
<evidence type="ECO:0000255" key="2">
    <source>
        <dbReference type="PROSITE-ProRule" id="PRU00556"/>
    </source>
</evidence>
<evidence type="ECO:0000256" key="3">
    <source>
        <dbReference type="SAM" id="MobiDB-lite"/>
    </source>
</evidence>
<evidence type="ECO:0000305" key="4"/>
<name>PMPB_CHLTR</name>
<sequence length="1754" mass="183318">MSSMKWLSATAVFAAVLPSVSGFCFPEPKELNFSRVGTSSSTTFTETVGEAGAEYIVSGNASFTKFTNIPTTDTTTPTNSNSSSSNGETASVSEDSDSTTTTPDPKGGGAFYNAHSGVLSFMTRSGTEGSLTLSEIKITGEGGAIFSQGELLFTDLTGLTIQNNLSQLSGGAIFGESTISLSGITKATFSSNSAEVPAPVKKPTEPKAQTASETSGSSSSSGNDSVSSPSSSRAEPAAANLQSHFICATATPAAQTDTETSTPSHKPGSGGAIYAKGDLTIADSQEVLFSINKATKDGGAIFAEKDVSFENITSLKVQTNGAEEKGGAIYAKGDLSIQSSKQSLFNSNYSKQGGGALYVEGDINFQDLEEIRIKYNKAGTFETKKITLPKAQASAGNADAWASSSPQSGSGATTVSNSGDSSSGSDSDTSETVPATAKGGGLYTDKNLSITNITGIIEIANNKATDVGGGAYVKGTLTCENSHRLQFLKNSSDKQGGGIYGEDNITLSNLTGKTLFQENTAKEEGGGLFIKGTDKALTMTGLDSFCLINNTSEKHGGGAFVTKEISQTYTSDVETIPGITPVHGETVITGNKSTGGNGGGVCTKRLALSNLQSISISGNSAAENGGGAHTCPDSFPTADTAEQPAAASAATSTPESAPVVSTALSTPSSSTVSSLTLLAASSQASPATSNKETQDPNADTDLLIDYVVDTTISKNTAKKGGGIYAKKAKMSRIDQLNISENSATEIGGGICCKESLELDALVSLSVTENLVGKEGGGLHAKTVNISNLKSGFSFSNNKANSSSTGVATTASAPAAAAASLQAAAAAVPSSPATPTYSGVVGGAIYGEKVTFSQCSGTCQFSGNQAIDNNPSQSSLNVQGGAIYAKTSLSIGSSDAGTSYIFSGNSVSTGKSQTTGQIAGGAIYSPTVTLNCPATFSNNTASMATPKTSSEDGSSGNSIKDTIGGAIAGTAITLSGVSRFSGNTADLGAAIGTLANANTPSATSGSQNSITEKITLENGSFIFERNQANKRGAIYSPSVSIKGNNITFNQNTSTHDGSAIYFTKDATIESLGSVLFTGNNVTATQASSATSGQNTNTANYGAAIFGDPGTTQSSQTDAILTLLASSGNITFSNNSLQNNQGDTPASKFCSIAGYVKLSLQAAKGKTISFFDCVHTSTKKIGSTQNVYETLDINKEENSNPYTGTIVFSSELHENKSYIPQNAILHNGTLVLKEKTELHVVSFEQKEGSKLIMKPGAVLSNQNIANGALVINGLTIDLSSMGTPQAGEIFSPPELRIVATTSSASGGSGVSSSIPTNPKRISAAAPSGSAATTPTMSENKVFLTGDLTLIDPNGNFYQNPMLGSDLDVPLIKLPTNTSDVQVYDLTLSGDLFPQKGYMGTWTLDSNPQTGKLQARWTFDTYRRWVYIPRDNHFYANSILGSQNSMIVVKQGLINNMLNNARFDDIAYNNFWVSGVGTFLAQQGTPLSEEFSYYSRGTSVAIDAKPRQDFILGAAFSKMVGKTKAIKKMHNYFHKGSEYSYQASVYGGKFLYFLLNKQHGWALPFLIQGVVSYGHIKHDTTTLYPSIHERNKGDWEDLGWLADLRISMDLKEPSKDSSKRITVYGELEYSSIRQKQFTEIDYDPRHFDDCAYRNLSLPVGCAVEGAIMNCNILMYNKLALAYMPSIYRNNPVCKYRVLSSNEAGQVICGVPTRTSARAEYSTQLYLGPFWTLYGNYTIDVGMYTLSQMTSCGARMIF</sequence>
<comment type="subcellular location">
    <subcellularLocation>
        <location>Secreted</location>
        <location>Cell wall</location>
    </subcellularLocation>
    <subcellularLocation>
        <location evidence="4">Cell outer membrane</location>
        <topology evidence="4">Peripheral membrane protein</topology>
        <orientation evidence="4">Extracellular side</orientation>
    </subcellularLocation>
</comment>
<comment type="developmental stage">
    <text>Elementary body.</text>
</comment>
<comment type="similarity">
    <text evidence="4">Belongs to the PMP outer membrane protein family.</text>
</comment>
<comment type="sequence caution" evidence="4">
    <conflict type="erroneous initiation">
        <sequence resource="EMBL-CDS" id="AAC68010"/>
    </conflict>
</comment>
<proteinExistence type="evidence at transcript level"/>
<keyword id="KW-0998">Cell outer membrane</keyword>
<keyword id="KW-0134">Cell wall</keyword>
<keyword id="KW-0472">Membrane</keyword>
<keyword id="KW-1185">Reference proteome</keyword>
<keyword id="KW-0964">Secreted</keyword>
<keyword id="KW-0732">Signal</keyword>
<keyword id="KW-0812">Transmembrane</keyword>
<keyword id="KW-1134">Transmembrane beta strand</keyword>
<feature type="signal peptide" evidence="1">
    <location>
        <begin position="1"/>
        <end position="14"/>
    </location>
</feature>
<feature type="chain" id="PRO_0000024719" description="Probable outer membrane protein PmpB">
    <location>
        <begin position="15"/>
        <end position="1754"/>
    </location>
</feature>
<feature type="domain" description="Autotransporter" evidence="2">
    <location>
        <begin position="1461"/>
        <end position="1754"/>
    </location>
</feature>
<feature type="region of interest" description="Disordered" evidence="3">
    <location>
        <begin position="68"/>
        <end position="109"/>
    </location>
</feature>
<feature type="region of interest" description="Disordered" evidence="3">
    <location>
        <begin position="190"/>
        <end position="235"/>
    </location>
</feature>
<feature type="region of interest" description="Disordered" evidence="3">
    <location>
        <begin position="252"/>
        <end position="271"/>
    </location>
</feature>
<feature type="region of interest" description="Disordered" evidence="3">
    <location>
        <begin position="397"/>
        <end position="438"/>
    </location>
</feature>
<feature type="region of interest" description="Disordered" evidence="3">
    <location>
        <begin position="621"/>
        <end position="668"/>
    </location>
</feature>
<feature type="region of interest" description="Disordered" evidence="3">
    <location>
        <begin position="1299"/>
        <end position="1332"/>
    </location>
</feature>
<feature type="compositionally biased region" description="Low complexity" evidence="3">
    <location>
        <begin position="68"/>
        <end position="105"/>
    </location>
</feature>
<feature type="compositionally biased region" description="Low complexity" evidence="3">
    <location>
        <begin position="212"/>
        <end position="232"/>
    </location>
</feature>
<feature type="compositionally biased region" description="Polar residues" evidence="3">
    <location>
        <begin position="252"/>
        <end position="264"/>
    </location>
</feature>
<feature type="compositionally biased region" description="Polar residues" evidence="3">
    <location>
        <begin position="402"/>
        <end position="412"/>
    </location>
</feature>
<feature type="compositionally biased region" description="Low complexity" evidence="3">
    <location>
        <begin position="413"/>
        <end position="427"/>
    </location>
</feature>
<feature type="compositionally biased region" description="Low complexity" evidence="3">
    <location>
        <begin position="636"/>
        <end position="668"/>
    </location>
</feature>
<feature type="compositionally biased region" description="Low complexity" evidence="3">
    <location>
        <begin position="1299"/>
        <end position="1311"/>
    </location>
</feature>
<feature type="compositionally biased region" description="Low complexity" evidence="3">
    <location>
        <begin position="1320"/>
        <end position="1332"/>
    </location>
</feature>
<protein>
    <recommendedName>
        <fullName>Probable outer membrane protein PmpB</fullName>
    </recommendedName>
    <alternativeName>
        <fullName>Polymorphic membrane protein B</fullName>
    </alternativeName>
</protein>
<organism>
    <name type="scientific">Chlamydia trachomatis serovar D (strain ATCC VR-885 / DSM 19411 / UW-3/Cx)</name>
    <dbReference type="NCBI Taxonomy" id="272561"/>
    <lineage>
        <taxon>Bacteria</taxon>
        <taxon>Pseudomonadati</taxon>
        <taxon>Chlamydiota</taxon>
        <taxon>Chlamydiia</taxon>
        <taxon>Chlamydiales</taxon>
        <taxon>Chlamydiaceae</taxon>
        <taxon>Chlamydia/Chlamydophila group</taxon>
        <taxon>Chlamydia</taxon>
    </lineage>
</organism>